<proteinExistence type="predicted"/>
<gene>
    <name type="ordered locus">YCR108C</name>
</gene>
<keyword id="KW-1185">Reference proteome</keyword>
<organism>
    <name type="scientific">Saccharomyces cerevisiae (strain ATCC 204508 / S288c)</name>
    <name type="common">Baker's yeast</name>
    <dbReference type="NCBI Taxonomy" id="559292"/>
    <lineage>
        <taxon>Eukaryota</taxon>
        <taxon>Fungi</taxon>
        <taxon>Dikarya</taxon>
        <taxon>Ascomycota</taxon>
        <taxon>Saccharomycotina</taxon>
        <taxon>Saccharomycetes</taxon>
        <taxon>Saccharomycetales</taxon>
        <taxon>Saccharomycetaceae</taxon>
        <taxon>Saccharomyces</taxon>
    </lineage>
</organism>
<sequence length="63" mass="7266">MPYSPSLILMGHTHTDATVYTTLKLPYSHTPIHGPFSLNQYQMHPHHYARHLPQRSIPCAIYP</sequence>
<protein>
    <recommendedName>
        <fullName>Uncharacterized protein YCR108C</fullName>
    </recommendedName>
</protein>
<reference key="1">
    <citation type="journal article" date="1992" name="Nature">
        <title>The complete DNA sequence of yeast chromosome III.</title>
        <authorList>
            <person name="Oliver S.G."/>
            <person name="van der Aart Q.J.M."/>
            <person name="Agostoni-Carbone M.L."/>
            <person name="Aigle M."/>
            <person name="Alberghina L."/>
            <person name="Alexandraki D."/>
            <person name="Antoine G."/>
            <person name="Anwar R."/>
            <person name="Ballesta J.P.G."/>
            <person name="Benit P."/>
            <person name="Berben G."/>
            <person name="Bergantino E."/>
            <person name="Biteau N."/>
            <person name="Bolle P.-A."/>
            <person name="Bolotin-Fukuhara M."/>
            <person name="Brown A."/>
            <person name="Brown A.J.P."/>
            <person name="Buhler J.-M."/>
            <person name="Carcano C."/>
            <person name="Carignani G."/>
            <person name="Cederberg H."/>
            <person name="Chanet R."/>
            <person name="Contreras R."/>
            <person name="Crouzet M."/>
            <person name="Daignan-Fornier B."/>
            <person name="Defoor E."/>
            <person name="Delgado M.D."/>
            <person name="Demolder J."/>
            <person name="Doira C."/>
            <person name="Dubois E."/>
            <person name="Dujon B."/>
            <person name="Duesterhoeft A."/>
            <person name="Erdmann D."/>
            <person name="Esteban M."/>
            <person name="Fabre F."/>
            <person name="Fairhead C."/>
            <person name="Faye G."/>
            <person name="Feldmann H."/>
            <person name="Fiers W."/>
            <person name="Francingues-Gaillard M.-C."/>
            <person name="Franco L."/>
            <person name="Frontali L."/>
            <person name="Fukuhara H."/>
            <person name="Fuller L.J."/>
            <person name="Galland P."/>
            <person name="Gent M.E."/>
            <person name="Gigot D."/>
            <person name="Gilliquet V."/>
            <person name="Glansdorff N."/>
            <person name="Goffeau A."/>
            <person name="Grenson M."/>
            <person name="Grisanti P."/>
            <person name="Grivell L.A."/>
            <person name="de Haan M."/>
            <person name="Haasemann M."/>
            <person name="Hatat D."/>
            <person name="Hoenicka J."/>
            <person name="Hegemann J.H."/>
            <person name="Herbert C.J."/>
            <person name="Hilger F."/>
            <person name="Hohmann S."/>
            <person name="Hollenberg C.P."/>
            <person name="Huse K."/>
            <person name="Iborra F."/>
            <person name="Indge K.J."/>
            <person name="Isono K."/>
            <person name="Jacq C."/>
            <person name="Jacquet M."/>
            <person name="James C.M."/>
            <person name="Jauniaux J.-C."/>
            <person name="Jia Y."/>
            <person name="Jimenez A."/>
            <person name="Kelly A."/>
            <person name="Kleinhans U."/>
            <person name="Kreisl P."/>
            <person name="Lanfranchi G."/>
            <person name="Lewis C."/>
            <person name="van der Linden C.G."/>
            <person name="Lucchini G."/>
            <person name="Lutzenkirchen K."/>
            <person name="Maat M.J."/>
            <person name="Mallet L."/>
            <person name="Mannhaupt G."/>
            <person name="Martegani E."/>
            <person name="Mathieu A."/>
            <person name="Maurer C.T.C."/>
            <person name="McConnell D."/>
            <person name="McKee R.A."/>
            <person name="Messenguy F."/>
            <person name="Mewes H.-W."/>
            <person name="Molemans F."/>
            <person name="Montague M.A."/>
            <person name="Muzi Falconi M."/>
            <person name="Navas L."/>
            <person name="Newlon C.S."/>
            <person name="Noone D."/>
            <person name="Pallier C."/>
            <person name="Panzeri L."/>
            <person name="Pearson B.M."/>
            <person name="Perea J."/>
            <person name="Philippsen P."/>
            <person name="Pierard A."/>
            <person name="Planta R.J."/>
            <person name="Plevani P."/>
            <person name="Poetsch B."/>
            <person name="Pohl F.M."/>
            <person name="Purnelle B."/>
            <person name="Ramezani Rad M."/>
            <person name="Rasmussen S.W."/>
            <person name="Raynal A."/>
            <person name="Remacha M.A."/>
            <person name="Richterich P."/>
            <person name="Roberts A.B."/>
            <person name="Rodriguez F."/>
            <person name="Sanz E."/>
            <person name="Schaaff-Gerstenschlaeger I."/>
            <person name="Scherens B."/>
            <person name="Schweitzer B."/>
            <person name="Shu Y."/>
            <person name="Skala J."/>
            <person name="Slonimski P.P."/>
            <person name="Sor F."/>
            <person name="Soustelle C."/>
            <person name="Spiegelberg R."/>
            <person name="Stateva L.I."/>
            <person name="Steensma H.Y."/>
            <person name="Steiner S."/>
            <person name="Thierry A."/>
            <person name="Thireos G."/>
            <person name="Tzermia M."/>
            <person name="Urrestarazu L.A."/>
            <person name="Valle G."/>
            <person name="Vetter I."/>
            <person name="van Vliet-Reedijk J.C."/>
            <person name="Voet M."/>
            <person name="Volckaert G."/>
            <person name="Vreken P."/>
            <person name="Wang H."/>
            <person name="Warmington J.R."/>
            <person name="von Wettstein D."/>
            <person name="Wicksteed B.L."/>
            <person name="Wilson C."/>
            <person name="Wurst H."/>
            <person name="Xu G."/>
            <person name="Yoshikawa A."/>
            <person name="Zimmermann F.K."/>
            <person name="Sgouros J.G."/>
        </authorList>
    </citation>
    <scope>NUCLEOTIDE SEQUENCE [LARGE SCALE GENOMIC DNA]</scope>
    <source>
        <strain>ATCC 204508 / S288c</strain>
    </source>
</reference>
<reference key="2">
    <citation type="journal article" date="2014" name="G3 (Bethesda)">
        <title>The reference genome sequence of Saccharomyces cerevisiae: Then and now.</title>
        <authorList>
            <person name="Engel S.R."/>
            <person name="Dietrich F.S."/>
            <person name="Fisk D.G."/>
            <person name="Binkley G."/>
            <person name="Balakrishnan R."/>
            <person name="Costanzo M.C."/>
            <person name="Dwight S.S."/>
            <person name="Hitz B.C."/>
            <person name="Karra K."/>
            <person name="Nash R.S."/>
            <person name="Weng S."/>
            <person name="Wong E.D."/>
            <person name="Lloyd P."/>
            <person name="Skrzypek M.S."/>
            <person name="Miyasato S.R."/>
            <person name="Simison M."/>
            <person name="Cherry J.M."/>
        </authorList>
    </citation>
    <scope>GENOME REANNOTATION</scope>
    <source>
        <strain>ATCC 204508 / S288c</strain>
    </source>
</reference>
<reference key="3">
    <citation type="journal article" date="2003" name="Genome Res.">
        <title>Systematic discovery of new genes in the Saccharomyces cerevisiae genome.</title>
        <authorList>
            <person name="Kessler M.M."/>
            <person name="Zeng Q."/>
            <person name="Hogan S."/>
            <person name="Cook R."/>
            <person name="Morales A.J."/>
            <person name="Cottarel G."/>
        </authorList>
    </citation>
    <scope>GENOME REANNOTATION</scope>
</reference>
<feature type="chain" id="PRO_0000248454" description="Uncharacterized protein YCR108C">
    <location>
        <begin position="1"/>
        <end position="63"/>
    </location>
</feature>
<name>YC108_YEAST</name>
<accession>Q3E819</accession>
<accession>D6VRA8</accession>
<dbReference type="EMBL" id="X59720">
    <property type="status" value="NOT_ANNOTATED_CDS"/>
    <property type="molecule type" value="Genomic_DNA"/>
</dbReference>
<dbReference type="EMBL" id="BK006937">
    <property type="protein sequence ID" value="DAA07577.1"/>
    <property type="molecule type" value="Genomic_DNA"/>
</dbReference>
<dbReference type="RefSeq" id="NP_878059.1">
    <property type="nucleotide sequence ID" value="NM_001184543.1"/>
</dbReference>
<dbReference type="FunCoup" id="Q3E819">
    <property type="interactions" value="14"/>
</dbReference>
<dbReference type="STRING" id="4932.YCR108C"/>
<dbReference type="PaxDb" id="4932-YCR108C"/>
<dbReference type="EnsemblFungi" id="YCR108C_mRNA">
    <property type="protein sequence ID" value="YCR108C"/>
    <property type="gene ID" value="YCR108C"/>
</dbReference>
<dbReference type="GeneID" id="1466400"/>
<dbReference type="KEGG" id="sce:YCR108C"/>
<dbReference type="AGR" id="SGD:S000028536"/>
<dbReference type="SGD" id="S000028536">
    <property type="gene designation" value="YCR108C"/>
</dbReference>
<dbReference type="VEuPathDB" id="FungiDB:YCR108C"/>
<dbReference type="HOGENOM" id="CLU_2887548_0_0_1"/>
<dbReference type="InParanoid" id="Q3E819"/>
<dbReference type="OrthoDB" id="10275100at2759"/>
<dbReference type="BioCyc" id="YEAST:G3O-29426-MONOMER"/>
<dbReference type="PRO" id="PR:Q3E819"/>
<dbReference type="Proteomes" id="UP000002311">
    <property type="component" value="Chromosome III"/>
</dbReference>
<dbReference type="RNAct" id="Q3E819">
    <property type="molecule type" value="protein"/>
</dbReference>